<sequence>MSAQSRKSNSHNGKNSRVNPEIKFKLETLTELFPDWTNDDLIDLVHEYDDLETIIDKITSGAVTRWDEVKKPSKKERLEKRLEQQQQLQKEQQQHQLQQQHYHAQDLDGHHGGSSSHHHTKAGQGSGSRYSRDNNGTHSSSGGSNAKSKKQQQQQQQQQNGKPSLPSDNARAAISRGKPASGGGSWAAVASSDSKKHQQEEEEEEDQQQQRPESSPEEPSATTVQASETKTDGVEASASATSTAQSSTHATATASTGNAAHNEKPKKMSWAAIAAPKPKVVQKKQSSLNNVGGLKKEINEVAKETETPAAGQAQREPVSETNDKATNNQGKKADAQHEDTASKLSEQQQQQQEQLQAQQQEQQQTQQQDQSPIEFQSQGTNQEDTAQHNRPEEQKDTREITSNQVQIDEQEVAATSEPQEPSQTAQAVATEVNDGSKVKQQQQQPTVGVEAGKPQQQQQQEAYYQQQQQQQQQQQQQYFAQQQQYAQSQTPQHAPQQLSGQQAAVGQPNANANASANANAAAAATAAQQQYYMYQNQFPGYTYPGMFDSPSYAYGQQQAYQQPSQPSAQAGFGTGTASQYSIPQGYAAAPAADMTTASTATASPVAGHAQPQQQQPYGGSFLPYYAHFYQQSFPYAQPQYGMAGQYPYQVPKAGYNYYQPQRQTQGRNVQQGQQSPGHSPSQQGEDVQQQSQPTQQNQLQNGQQPLNPQQLQFQQYYQFQQQQQAAAAAAAAAAAQQGLPYGYTGYDYTSQASRGFY</sequence>
<evidence type="ECO:0000250" key="1">
    <source>
        <dbReference type="UniProtKB" id="P35732"/>
    </source>
</evidence>
<evidence type="ECO:0000255" key="2">
    <source>
        <dbReference type="PROSITE-ProRule" id="PRU00468"/>
    </source>
</evidence>
<evidence type="ECO:0000256" key="3">
    <source>
        <dbReference type="SAM" id="MobiDB-lite"/>
    </source>
</evidence>
<evidence type="ECO:0000305" key="4"/>
<comment type="function">
    <text evidence="1">Recruits the ubiquitination machinery to RNA polymerase II for polyubiquitination, removal and degradation, when the transcription-coupled repair (TCR) factor RAD26 fails to efficiently displace stalled RNA polymerase II. Also involved in telomere length regulation. Binds DNA.</text>
</comment>
<comment type="subunit">
    <text evidence="1">Homodimer; may form higher order oligomers. Interacts with the large RNA polymerase II subunit RPO21; the interaction is direct and serves to bridge RPO21 to the Elongin complex in a manner dependent on transcription stress. Interacts with RAD26.</text>
</comment>
<comment type="subcellular location">
    <subcellularLocation>
        <location evidence="1">Cytoplasm</location>
    </subcellularLocation>
    <subcellularLocation>
        <location evidence="1">Nucleus</location>
    </subcellularLocation>
    <subcellularLocation>
        <location evidence="1">Chromosome</location>
        <location evidence="1">Telomere</location>
    </subcellularLocation>
    <text evidence="1">During transcription stress, localizes to the nucleus following proteolytic cleavage by the proteasome.</text>
</comment>
<comment type="PTM">
    <text evidence="1">Ubiquitinated.</text>
</comment>
<comment type="PTM">
    <text evidence="1">Proteolytically cleaved by the proteasome in response to transcription stress; the resulting N-terminal form constitutes the activated nuclear form and the C-terminal portion is degraded.</text>
</comment>
<comment type="similarity">
    <text evidence="4">Belongs to the DEF1 family.</text>
</comment>
<organism>
    <name type="scientific">Zygosaccharomyces rouxii (strain ATCC 2623 / CBS 732 / NBRC 1130 / NCYC 568 / NRRL Y-229)</name>
    <dbReference type="NCBI Taxonomy" id="559307"/>
    <lineage>
        <taxon>Eukaryota</taxon>
        <taxon>Fungi</taxon>
        <taxon>Dikarya</taxon>
        <taxon>Ascomycota</taxon>
        <taxon>Saccharomycotina</taxon>
        <taxon>Saccharomycetes</taxon>
        <taxon>Saccharomycetales</taxon>
        <taxon>Saccharomycetaceae</taxon>
        <taxon>Zygosaccharomyces</taxon>
    </lineage>
</organism>
<accession>C5E4K0</accession>
<dbReference type="EMBL" id="CU928181">
    <property type="protein sequence ID" value="CAR30961.1"/>
    <property type="molecule type" value="Genomic_DNA"/>
</dbReference>
<dbReference type="RefSeq" id="XP_002499216.1">
    <property type="nucleotide sequence ID" value="XM_002499171.1"/>
</dbReference>
<dbReference type="SMR" id="C5E4K0"/>
<dbReference type="FunCoup" id="C5E4K0">
    <property type="interactions" value="309"/>
</dbReference>
<dbReference type="GeneID" id="8204771"/>
<dbReference type="KEGG" id="zro:ZYRO0E06754g"/>
<dbReference type="HOGENOM" id="CLU_023119_0_0_1"/>
<dbReference type="InParanoid" id="C5E4K0"/>
<dbReference type="Proteomes" id="UP000008536">
    <property type="component" value="Chromosome E"/>
</dbReference>
<dbReference type="GO" id="GO:0000781">
    <property type="term" value="C:chromosome, telomeric region"/>
    <property type="evidence" value="ECO:0007669"/>
    <property type="project" value="UniProtKB-SubCell"/>
</dbReference>
<dbReference type="GO" id="GO:0005737">
    <property type="term" value="C:cytoplasm"/>
    <property type="evidence" value="ECO:0007669"/>
    <property type="project" value="UniProtKB-SubCell"/>
</dbReference>
<dbReference type="GO" id="GO:0005634">
    <property type="term" value="C:nucleus"/>
    <property type="evidence" value="ECO:0007669"/>
    <property type="project" value="UniProtKB-SubCell"/>
</dbReference>
<dbReference type="GO" id="GO:0003677">
    <property type="term" value="F:DNA binding"/>
    <property type="evidence" value="ECO:0007669"/>
    <property type="project" value="UniProtKB-KW"/>
</dbReference>
<dbReference type="GO" id="GO:0043130">
    <property type="term" value="F:ubiquitin binding"/>
    <property type="evidence" value="ECO:0007669"/>
    <property type="project" value="InterPro"/>
</dbReference>
<dbReference type="GO" id="GO:0006281">
    <property type="term" value="P:DNA repair"/>
    <property type="evidence" value="ECO:0007669"/>
    <property type="project" value="UniProtKB-KW"/>
</dbReference>
<dbReference type="CDD" id="cd14368">
    <property type="entry name" value="CUE_DEF1_like"/>
    <property type="match status" value="1"/>
</dbReference>
<dbReference type="InterPro" id="IPR003892">
    <property type="entry name" value="CUE"/>
</dbReference>
<dbReference type="InterPro" id="IPR041803">
    <property type="entry name" value="DEF1_CUE"/>
</dbReference>
<dbReference type="PROSITE" id="PS51140">
    <property type="entry name" value="CUE"/>
    <property type="match status" value="1"/>
</dbReference>
<protein>
    <recommendedName>
        <fullName>RNA polymerase II degradation factor 1</fullName>
    </recommendedName>
</protein>
<gene>
    <name type="primary">DEF1</name>
    <name type="ordered locus">ZYRO0E06754g</name>
</gene>
<proteinExistence type="inferred from homology"/>
<feature type="chain" id="PRO_0000405673" description="RNA polymerase II degradation factor 1">
    <location>
        <begin position="1"/>
        <end position="757"/>
    </location>
</feature>
<feature type="domain" description="CUE" evidence="2">
    <location>
        <begin position="21"/>
        <end position="63"/>
    </location>
</feature>
<feature type="region of interest" description="Disordered" evidence="3">
    <location>
        <begin position="1"/>
        <end position="20"/>
    </location>
</feature>
<feature type="region of interest" description="Disordered" evidence="3">
    <location>
        <begin position="69"/>
        <end position="521"/>
    </location>
</feature>
<feature type="region of interest" description="Disordered" evidence="3">
    <location>
        <begin position="556"/>
        <end position="575"/>
    </location>
</feature>
<feature type="region of interest" description="Disordered" evidence="3">
    <location>
        <begin position="664"/>
        <end position="703"/>
    </location>
</feature>
<feature type="compositionally biased region" description="Polar residues" evidence="3">
    <location>
        <begin position="1"/>
        <end position="18"/>
    </location>
</feature>
<feature type="compositionally biased region" description="Basic and acidic residues" evidence="3">
    <location>
        <begin position="69"/>
        <end position="83"/>
    </location>
</feature>
<feature type="compositionally biased region" description="Low complexity" evidence="3">
    <location>
        <begin position="84"/>
        <end position="101"/>
    </location>
</feature>
<feature type="compositionally biased region" description="Low complexity" evidence="3">
    <location>
        <begin position="134"/>
        <end position="159"/>
    </location>
</feature>
<feature type="compositionally biased region" description="Low complexity" evidence="3">
    <location>
        <begin position="209"/>
        <end position="220"/>
    </location>
</feature>
<feature type="compositionally biased region" description="Low complexity" evidence="3">
    <location>
        <begin position="236"/>
        <end position="260"/>
    </location>
</feature>
<feature type="compositionally biased region" description="Basic and acidic residues" evidence="3">
    <location>
        <begin position="294"/>
        <end position="306"/>
    </location>
</feature>
<feature type="compositionally biased region" description="Basic and acidic residues" evidence="3">
    <location>
        <begin position="331"/>
        <end position="341"/>
    </location>
</feature>
<feature type="compositionally biased region" description="Low complexity" evidence="3">
    <location>
        <begin position="346"/>
        <end position="370"/>
    </location>
</feature>
<feature type="compositionally biased region" description="Polar residues" evidence="3">
    <location>
        <begin position="371"/>
        <end position="384"/>
    </location>
</feature>
<feature type="compositionally biased region" description="Basic and acidic residues" evidence="3">
    <location>
        <begin position="385"/>
        <end position="399"/>
    </location>
</feature>
<feature type="compositionally biased region" description="Polar residues" evidence="3">
    <location>
        <begin position="416"/>
        <end position="427"/>
    </location>
</feature>
<feature type="compositionally biased region" description="Low complexity" evidence="3">
    <location>
        <begin position="455"/>
        <end position="489"/>
    </location>
</feature>
<feature type="compositionally biased region" description="Polar residues" evidence="3">
    <location>
        <begin position="490"/>
        <end position="504"/>
    </location>
</feature>
<feature type="compositionally biased region" description="Low complexity" evidence="3">
    <location>
        <begin position="509"/>
        <end position="521"/>
    </location>
</feature>
<feature type="compositionally biased region" description="Low complexity" evidence="3">
    <location>
        <begin position="556"/>
        <end position="571"/>
    </location>
</feature>
<keyword id="KW-0158">Chromosome</keyword>
<keyword id="KW-0963">Cytoplasm</keyword>
<keyword id="KW-0227">DNA damage</keyword>
<keyword id="KW-0234">DNA repair</keyword>
<keyword id="KW-0238">DNA-binding</keyword>
<keyword id="KW-0539">Nucleus</keyword>
<keyword id="KW-1185">Reference proteome</keyword>
<keyword id="KW-0779">Telomere</keyword>
<keyword id="KW-0832">Ubl conjugation</keyword>
<keyword id="KW-0833">Ubl conjugation pathway</keyword>
<reference key="1">
    <citation type="journal article" date="2009" name="Genome Res.">
        <title>Comparative genomics of protoploid Saccharomycetaceae.</title>
        <authorList>
            <consortium name="The Genolevures Consortium"/>
            <person name="Souciet J.-L."/>
            <person name="Dujon B."/>
            <person name="Gaillardin C."/>
            <person name="Johnston M."/>
            <person name="Baret P.V."/>
            <person name="Cliften P."/>
            <person name="Sherman D.J."/>
            <person name="Weissenbach J."/>
            <person name="Westhof E."/>
            <person name="Wincker P."/>
            <person name="Jubin C."/>
            <person name="Poulain J."/>
            <person name="Barbe V."/>
            <person name="Segurens B."/>
            <person name="Artiguenave F."/>
            <person name="Anthouard V."/>
            <person name="Vacherie B."/>
            <person name="Val M.-E."/>
            <person name="Fulton R.S."/>
            <person name="Minx P."/>
            <person name="Wilson R."/>
            <person name="Durrens P."/>
            <person name="Jean G."/>
            <person name="Marck C."/>
            <person name="Martin T."/>
            <person name="Nikolski M."/>
            <person name="Rolland T."/>
            <person name="Seret M.-L."/>
            <person name="Casaregola S."/>
            <person name="Despons L."/>
            <person name="Fairhead C."/>
            <person name="Fischer G."/>
            <person name="Lafontaine I."/>
            <person name="Leh V."/>
            <person name="Lemaire M."/>
            <person name="de Montigny J."/>
            <person name="Neuveglise C."/>
            <person name="Thierry A."/>
            <person name="Blanc-Lenfle I."/>
            <person name="Bleykasten C."/>
            <person name="Diffels J."/>
            <person name="Fritsch E."/>
            <person name="Frangeul L."/>
            <person name="Goeffon A."/>
            <person name="Jauniaux N."/>
            <person name="Kachouri-Lafond R."/>
            <person name="Payen C."/>
            <person name="Potier S."/>
            <person name="Pribylova L."/>
            <person name="Ozanne C."/>
            <person name="Richard G.-F."/>
            <person name="Sacerdot C."/>
            <person name="Straub M.-L."/>
            <person name="Talla E."/>
        </authorList>
    </citation>
    <scope>NUCLEOTIDE SEQUENCE [LARGE SCALE GENOMIC DNA]</scope>
    <source>
        <strain>ATCC 2623 / CBS 732 / BCRC 21506 / NBRC 1130 / NCYC 568 / NRRL Y-229</strain>
    </source>
</reference>
<name>DEF1_ZYGRC</name>